<protein>
    <recommendedName>
        <fullName evidence="1">Putative phosphoenolpyruvate synthase regulatory protein</fullName>
        <shortName evidence="1">PEP synthase regulatory protein</shortName>
        <shortName evidence="1">PSRP</shortName>
        <ecNumber evidence="1">2.7.11.33</ecNumber>
        <ecNumber evidence="1">2.7.4.28</ecNumber>
    </recommendedName>
    <alternativeName>
        <fullName evidence="1">Pyruvate, water dikinase regulatory protein</fullName>
    </alternativeName>
</protein>
<proteinExistence type="inferred from homology"/>
<comment type="function">
    <text evidence="1">Bifunctional serine/threonine kinase and phosphorylase involved in the regulation of the phosphoenolpyruvate synthase (PEPS) by catalyzing its phosphorylation/dephosphorylation.</text>
</comment>
<comment type="catalytic activity">
    <reaction evidence="1">
        <text>[pyruvate, water dikinase] + ADP = [pyruvate, water dikinase]-phosphate + AMP + H(+)</text>
        <dbReference type="Rhea" id="RHEA:46020"/>
        <dbReference type="Rhea" id="RHEA-COMP:11425"/>
        <dbReference type="Rhea" id="RHEA-COMP:11426"/>
        <dbReference type="ChEBI" id="CHEBI:15378"/>
        <dbReference type="ChEBI" id="CHEBI:43176"/>
        <dbReference type="ChEBI" id="CHEBI:68546"/>
        <dbReference type="ChEBI" id="CHEBI:456215"/>
        <dbReference type="ChEBI" id="CHEBI:456216"/>
        <dbReference type="EC" id="2.7.11.33"/>
    </reaction>
</comment>
<comment type="catalytic activity">
    <reaction evidence="1">
        <text>[pyruvate, water dikinase]-phosphate + phosphate + H(+) = [pyruvate, water dikinase] + diphosphate</text>
        <dbReference type="Rhea" id="RHEA:48580"/>
        <dbReference type="Rhea" id="RHEA-COMP:11425"/>
        <dbReference type="Rhea" id="RHEA-COMP:11426"/>
        <dbReference type="ChEBI" id="CHEBI:15378"/>
        <dbReference type="ChEBI" id="CHEBI:33019"/>
        <dbReference type="ChEBI" id="CHEBI:43176"/>
        <dbReference type="ChEBI" id="CHEBI:43474"/>
        <dbReference type="ChEBI" id="CHEBI:68546"/>
        <dbReference type="EC" id="2.7.4.28"/>
    </reaction>
</comment>
<comment type="similarity">
    <text evidence="1">Belongs to the pyruvate, phosphate/water dikinase regulatory protein family. PSRP subfamily.</text>
</comment>
<accession>B8E794</accession>
<gene>
    <name type="ordered locus">Sbal223_1862</name>
</gene>
<keyword id="KW-0418">Kinase</keyword>
<keyword id="KW-0547">Nucleotide-binding</keyword>
<keyword id="KW-0723">Serine/threonine-protein kinase</keyword>
<keyword id="KW-0808">Transferase</keyword>
<organism>
    <name type="scientific">Shewanella baltica (strain OS223)</name>
    <dbReference type="NCBI Taxonomy" id="407976"/>
    <lineage>
        <taxon>Bacteria</taxon>
        <taxon>Pseudomonadati</taxon>
        <taxon>Pseudomonadota</taxon>
        <taxon>Gammaproteobacteria</taxon>
        <taxon>Alteromonadales</taxon>
        <taxon>Shewanellaceae</taxon>
        <taxon>Shewanella</taxon>
    </lineage>
</organism>
<name>PSRP_SHEB2</name>
<sequence>MAPKVFYISDGTAITAEVFGHAVLSQFPLEFESLTIPFVETLTKAEQVKRQINDCFITTGERPLVFHSIVKAEIRDIIYSSEGLDYDFLNTFVAPLEQHLGVSASPVLHRTHGKANHGYEARIDAINFAMDNDDGQTMKHMDQADLVLLGVSRCGKTPSSLYLSMQFGIKAANYPFTEDDMDNLKLPDALKRNKKKLFGLTIDPVRLHEIRQSRMENSRYSSLKQCRLEVKEVEMLFKRERIPYIDTTNHSVEEIATKILDVTGLERHMF</sequence>
<reference key="1">
    <citation type="submission" date="2008-12" db="EMBL/GenBank/DDBJ databases">
        <title>Complete sequence of chromosome of Shewanella baltica OS223.</title>
        <authorList>
            <consortium name="US DOE Joint Genome Institute"/>
            <person name="Lucas S."/>
            <person name="Copeland A."/>
            <person name="Lapidus A."/>
            <person name="Glavina del Rio T."/>
            <person name="Dalin E."/>
            <person name="Tice H."/>
            <person name="Bruce D."/>
            <person name="Goodwin L."/>
            <person name="Pitluck S."/>
            <person name="Chertkov O."/>
            <person name="Meincke L."/>
            <person name="Brettin T."/>
            <person name="Detter J.C."/>
            <person name="Han C."/>
            <person name="Kuske C.R."/>
            <person name="Larimer F."/>
            <person name="Land M."/>
            <person name="Hauser L."/>
            <person name="Kyrpides N."/>
            <person name="Ovchinnikova G."/>
            <person name="Brettar I."/>
            <person name="Rodrigues J."/>
            <person name="Konstantinidis K."/>
            <person name="Tiedje J."/>
        </authorList>
    </citation>
    <scope>NUCLEOTIDE SEQUENCE [LARGE SCALE GENOMIC DNA]</scope>
    <source>
        <strain>OS223</strain>
    </source>
</reference>
<evidence type="ECO:0000255" key="1">
    <source>
        <dbReference type="HAMAP-Rule" id="MF_01062"/>
    </source>
</evidence>
<dbReference type="EC" id="2.7.11.33" evidence="1"/>
<dbReference type="EC" id="2.7.4.28" evidence="1"/>
<dbReference type="EMBL" id="CP001252">
    <property type="protein sequence ID" value="ACK46367.1"/>
    <property type="molecule type" value="Genomic_DNA"/>
</dbReference>
<dbReference type="RefSeq" id="WP_006081952.1">
    <property type="nucleotide sequence ID" value="NC_011663.1"/>
</dbReference>
<dbReference type="SMR" id="B8E794"/>
<dbReference type="KEGG" id="sbp:Sbal223_1862"/>
<dbReference type="HOGENOM" id="CLU_046206_1_0_6"/>
<dbReference type="Proteomes" id="UP000002507">
    <property type="component" value="Chromosome"/>
</dbReference>
<dbReference type="GO" id="GO:0043531">
    <property type="term" value="F:ADP binding"/>
    <property type="evidence" value="ECO:0007669"/>
    <property type="project" value="UniProtKB-UniRule"/>
</dbReference>
<dbReference type="GO" id="GO:0005524">
    <property type="term" value="F:ATP binding"/>
    <property type="evidence" value="ECO:0007669"/>
    <property type="project" value="InterPro"/>
</dbReference>
<dbReference type="GO" id="GO:0016776">
    <property type="term" value="F:phosphotransferase activity, phosphate group as acceptor"/>
    <property type="evidence" value="ECO:0007669"/>
    <property type="project" value="UniProtKB-UniRule"/>
</dbReference>
<dbReference type="GO" id="GO:0004674">
    <property type="term" value="F:protein serine/threonine kinase activity"/>
    <property type="evidence" value="ECO:0007669"/>
    <property type="project" value="UniProtKB-UniRule"/>
</dbReference>
<dbReference type="HAMAP" id="MF_01062">
    <property type="entry name" value="PSRP"/>
    <property type="match status" value="1"/>
</dbReference>
<dbReference type="InterPro" id="IPR005177">
    <property type="entry name" value="Kinase-pyrophosphorylase"/>
</dbReference>
<dbReference type="InterPro" id="IPR026530">
    <property type="entry name" value="PSRP"/>
</dbReference>
<dbReference type="NCBIfam" id="NF003742">
    <property type="entry name" value="PRK05339.1"/>
    <property type="match status" value="1"/>
</dbReference>
<dbReference type="PANTHER" id="PTHR31756">
    <property type="entry name" value="PYRUVATE, PHOSPHATE DIKINASE REGULATORY PROTEIN 1, CHLOROPLASTIC"/>
    <property type="match status" value="1"/>
</dbReference>
<dbReference type="PANTHER" id="PTHR31756:SF3">
    <property type="entry name" value="PYRUVATE, PHOSPHATE DIKINASE REGULATORY PROTEIN 1, CHLOROPLASTIC"/>
    <property type="match status" value="1"/>
</dbReference>
<dbReference type="Pfam" id="PF03618">
    <property type="entry name" value="Kinase-PPPase"/>
    <property type="match status" value="1"/>
</dbReference>
<feature type="chain" id="PRO_1000149715" description="Putative phosphoenolpyruvate synthase regulatory protein">
    <location>
        <begin position="1"/>
        <end position="270"/>
    </location>
</feature>
<feature type="binding site" evidence="1">
    <location>
        <begin position="150"/>
        <end position="157"/>
    </location>
    <ligand>
        <name>ADP</name>
        <dbReference type="ChEBI" id="CHEBI:456216"/>
    </ligand>
</feature>